<organism>
    <name type="scientific">Caulobacter vibrioides (strain ATCC 19089 / CIP 103742 / CB 15)</name>
    <name type="common">Caulobacter crescentus</name>
    <dbReference type="NCBI Taxonomy" id="190650"/>
    <lineage>
        <taxon>Bacteria</taxon>
        <taxon>Pseudomonadati</taxon>
        <taxon>Pseudomonadota</taxon>
        <taxon>Alphaproteobacteria</taxon>
        <taxon>Caulobacterales</taxon>
        <taxon>Caulobacteraceae</taxon>
        <taxon>Caulobacter</taxon>
    </lineage>
</organism>
<sequence>MSHEIMRLSAFAPAKVNLFLHVGGPDGEGYHPISSLMVFADVGDRVNLQPADAPAFETSGPFGDQIPAGGDNLVVRAGQAFHRRLGGPVPPYRLILEKHLPIAAGLGGGSSDAGAALKLLRDALAPALSDDDLEALAASLGADGAACLRARALIAEGRGERLSPAPRLPELNAVLVNPGAPSPTGAVYRAYDAGVHPDGAAMPPMPDHLESAEEAAAWLAFATRNDLEAPAVRLEPHIGEVLDVLRGEPESLLVRMSGSGATCFALCASDIEAEGLAERLETMRPDWWVRRCRLS</sequence>
<gene>
    <name evidence="1" type="primary">ispE</name>
    <name type="ordered locus">CC_1336</name>
</gene>
<evidence type="ECO:0000255" key="1">
    <source>
        <dbReference type="HAMAP-Rule" id="MF_00061"/>
    </source>
</evidence>
<name>ISPE_CAUVC</name>
<reference key="1">
    <citation type="journal article" date="2001" name="Proc. Natl. Acad. Sci. U.S.A.">
        <title>Complete genome sequence of Caulobacter crescentus.</title>
        <authorList>
            <person name="Nierman W.C."/>
            <person name="Feldblyum T.V."/>
            <person name="Laub M.T."/>
            <person name="Paulsen I.T."/>
            <person name="Nelson K.E."/>
            <person name="Eisen J.A."/>
            <person name="Heidelberg J.F."/>
            <person name="Alley M.R.K."/>
            <person name="Ohta N."/>
            <person name="Maddock J.R."/>
            <person name="Potocka I."/>
            <person name="Nelson W.C."/>
            <person name="Newton A."/>
            <person name="Stephens C."/>
            <person name="Phadke N.D."/>
            <person name="Ely B."/>
            <person name="DeBoy R.T."/>
            <person name="Dodson R.J."/>
            <person name="Durkin A.S."/>
            <person name="Gwinn M.L."/>
            <person name="Haft D.H."/>
            <person name="Kolonay J.F."/>
            <person name="Smit J."/>
            <person name="Craven M.B."/>
            <person name="Khouri H.M."/>
            <person name="Shetty J."/>
            <person name="Berry K.J."/>
            <person name="Utterback T.R."/>
            <person name="Tran K."/>
            <person name="Wolf A.M."/>
            <person name="Vamathevan J.J."/>
            <person name="Ermolaeva M.D."/>
            <person name="White O."/>
            <person name="Salzberg S.L."/>
            <person name="Venter J.C."/>
            <person name="Shapiro L."/>
            <person name="Fraser C.M."/>
        </authorList>
    </citation>
    <scope>NUCLEOTIDE SEQUENCE [LARGE SCALE GENOMIC DNA]</scope>
    <source>
        <strain>ATCC 19089 / CIP 103742 / CB 15</strain>
    </source>
</reference>
<feature type="chain" id="PRO_0000189201" description="4-diphosphocytidyl-2-C-methyl-D-erythritol kinase">
    <location>
        <begin position="1"/>
        <end position="295"/>
    </location>
</feature>
<feature type="active site" evidence="1">
    <location>
        <position position="15"/>
    </location>
</feature>
<feature type="active site" evidence="1">
    <location>
        <position position="143"/>
    </location>
</feature>
<feature type="binding site" evidence="1">
    <location>
        <begin position="101"/>
        <end position="111"/>
    </location>
    <ligand>
        <name>ATP</name>
        <dbReference type="ChEBI" id="CHEBI:30616"/>
    </ligand>
</feature>
<keyword id="KW-0067">ATP-binding</keyword>
<keyword id="KW-0414">Isoprene biosynthesis</keyword>
<keyword id="KW-0418">Kinase</keyword>
<keyword id="KW-0547">Nucleotide-binding</keyword>
<keyword id="KW-1185">Reference proteome</keyword>
<keyword id="KW-0808">Transferase</keyword>
<comment type="function">
    <text evidence="1">Catalyzes the phosphorylation of the position 2 hydroxy group of 4-diphosphocytidyl-2C-methyl-D-erythritol.</text>
</comment>
<comment type="catalytic activity">
    <reaction evidence="1">
        <text>4-CDP-2-C-methyl-D-erythritol + ATP = 4-CDP-2-C-methyl-D-erythritol 2-phosphate + ADP + H(+)</text>
        <dbReference type="Rhea" id="RHEA:18437"/>
        <dbReference type="ChEBI" id="CHEBI:15378"/>
        <dbReference type="ChEBI" id="CHEBI:30616"/>
        <dbReference type="ChEBI" id="CHEBI:57823"/>
        <dbReference type="ChEBI" id="CHEBI:57919"/>
        <dbReference type="ChEBI" id="CHEBI:456216"/>
        <dbReference type="EC" id="2.7.1.148"/>
    </reaction>
</comment>
<comment type="pathway">
    <text evidence="1">Isoprenoid biosynthesis; isopentenyl diphosphate biosynthesis via DXP pathway; isopentenyl diphosphate from 1-deoxy-D-xylulose 5-phosphate: step 3/6.</text>
</comment>
<comment type="similarity">
    <text evidence="1">Belongs to the GHMP kinase family. IspE subfamily.</text>
</comment>
<dbReference type="EC" id="2.7.1.148" evidence="1"/>
<dbReference type="EMBL" id="AE005673">
    <property type="protein sequence ID" value="AAK23317.1"/>
    <property type="molecule type" value="Genomic_DNA"/>
</dbReference>
<dbReference type="PIR" id="A87415">
    <property type="entry name" value="A87415"/>
</dbReference>
<dbReference type="RefSeq" id="NP_420149.1">
    <property type="nucleotide sequence ID" value="NC_002696.2"/>
</dbReference>
<dbReference type="SMR" id="Q9A8L7"/>
<dbReference type="STRING" id="190650.CC_1336"/>
<dbReference type="EnsemblBacteria" id="AAK23317">
    <property type="protein sequence ID" value="AAK23317"/>
    <property type="gene ID" value="CC_1336"/>
</dbReference>
<dbReference type="KEGG" id="ccr:CC_1336"/>
<dbReference type="PATRIC" id="fig|190650.5.peg.1365"/>
<dbReference type="eggNOG" id="COG1947">
    <property type="taxonomic scope" value="Bacteria"/>
</dbReference>
<dbReference type="HOGENOM" id="CLU_053057_1_0_5"/>
<dbReference type="BioCyc" id="CAULO:CC1336-MONOMER"/>
<dbReference type="UniPathway" id="UPA00056">
    <property type="reaction ID" value="UER00094"/>
</dbReference>
<dbReference type="Proteomes" id="UP000001816">
    <property type="component" value="Chromosome"/>
</dbReference>
<dbReference type="GO" id="GO:0050515">
    <property type="term" value="F:4-(cytidine 5'-diphospho)-2-C-methyl-D-erythritol kinase activity"/>
    <property type="evidence" value="ECO:0007669"/>
    <property type="project" value="UniProtKB-UniRule"/>
</dbReference>
<dbReference type="GO" id="GO:0005524">
    <property type="term" value="F:ATP binding"/>
    <property type="evidence" value="ECO:0007669"/>
    <property type="project" value="UniProtKB-UniRule"/>
</dbReference>
<dbReference type="GO" id="GO:0019288">
    <property type="term" value="P:isopentenyl diphosphate biosynthetic process, methylerythritol 4-phosphate pathway"/>
    <property type="evidence" value="ECO:0007669"/>
    <property type="project" value="UniProtKB-UniRule"/>
</dbReference>
<dbReference type="GO" id="GO:0016114">
    <property type="term" value="P:terpenoid biosynthetic process"/>
    <property type="evidence" value="ECO:0007669"/>
    <property type="project" value="InterPro"/>
</dbReference>
<dbReference type="Gene3D" id="3.30.230.10">
    <property type="match status" value="1"/>
</dbReference>
<dbReference type="Gene3D" id="3.30.70.890">
    <property type="entry name" value="GHMP kinase, C-terminal domain"/>
    <property type="match status" value="1"/>
</dbReference>
<dbReference type="HAMAP" id="MF_00061">
    <property type="entry name" value="IspE"/>
    <property type="match status" value="1"/>
</dbReference>
<dbReference type="InterPro" id="IPR013750">
    <property type="entry name" value="GHMP_kinase_C_dom"/>
</dbReference>
<dbReference type="InterPro" id="IPR036554">
    <property type="entry name" value="GHMP_kinase_C_sf"/>
</dbReference>
<dbReference type="InterPro" id="IPR006204">
    <property type="entry name" value="GHMP_kinase_N_dom"/>
</dbReference>
<dbReference type="InterPro" id="IPR004424">
    <property type="entry name" value="IspE"/>
</dbReference>
<dbReference type="InterPro" id="IPR020568">
    <property type="entry name" value="Ribosomal_Su5_D2-typ_SF"/>
</dbReference>
<dbReference type="InterPro" id="IPR014721">
    <property type="entry name" value="Ribsml_uS5_D2-typ_fold_subgr"/>
</dbReference>
<dbReference type="NCBIfam" id="TIGR00154">
    <property type="entry name" value="ispE"/>
    <property type="match status" value="1"/>
</dbReference>
<dbReference type="NCBIfam" id="NF011202">
    <property type="entry name" value="PRK14608.1"/>
    <property type="match status" value="1"/>
</dbReference>
<dbReference type="PANTHER" id="PTHR43527">
    <property type="entry name" value="4-DIPHOSPHOCYTIDYL-2-C-METHYL-D-ERYTHRITOL KINASE, CHLOROPLASTIC"/>
    <property type="match status" value="1"/>
</dbReference>
<dbReference type="PANTHER" id="PTHR43527:SF2">
    <property type="entry name" value="4-DIPHOSPHOCYTIDYL-2-C-METHYL-D-ERYTHRITOL KINASE, CHLOROPLASTIC"/>
    <property type="match status" value="1"/>
</dbReference>
<dbReference type="Pfam" id="PF08544">
    <property type="entry name" value="GHMP_kinases_C"/>
    <property type="match status" value="1"/>
</dbReference>
<dbReference type="Pfam" id="PF00288">
    <property type="entry name" value="GHMP_kinases_N"/>
    <property type="match status" value="1"/>
</dbReference>
<dbReference type="PIRSF" id="PIRSF010376">
    <property type="entry name" value="IspE"/>
    <property type="match status" value="1"/>
</dbReference>
<dbReference type="SUPFAM" id="SSF55060">
    <property type="entry name" value="GHMP Kinase, C-terminal domain"/>
    <property type="match status" value="1"/>
</dbReference>
<dbReference type="SUPFAM" id="SSF54211">
    <property type="entry name" value="Ribosomal protein S5 domain 2-like"/>
    <property type="match status" value="1"/>
</dbReference>
<proteinExistence type="inferred from homology"/>
<accession>Q9A8L7</accession>
<protein>
    <recommendedName>
        <fullName evidence="1">4-diphosphocytidyl-2-C-methyl-D-erythritol kinase</fullName>
        <shortName evidence="1">CMK</shortName>
        <ecNumber evidence="1">2.7.1.148</ecNumber>
    </recommendedName>
    <alternativeName>
        <fullName evidence="1">4-(cytidine-5'-diphospho)-2-C-methyl-D-erythritol kinase</fullName>
    </alternativeName>
</protein>